<organism>
    <name type="scientific">Loofah witches'-broom phytoplasma</name>
    <dbReference type="NCBI Taxonomy" id="35773"/>
    <lineage>
        <taxon>Bacteria</taxon>
        <taxon>Bacillati</taxon>
        <taxon>Mycoplasmatota</taxon>
        <taxon>Mollicutes</taxon>
        <taxon>Acholeplasmatales</taxon>
        <taxon>Acholeplasmataceae</taxon>
        <taxon>Candidatus Phytoplasma</taxon>
        <taxon>16SrVIII (Loofah witches'-broom group)</taxon>
    </lineage>
</organism>
<dbReference type="EMBL" id="L27027">
    <property type="protein sequence ID" value="AAA83945.1"/>
    <property type="molecule type" value="Genomic_DNA"/>
</dbReference>
<dbReference type="SMR" id="Q48879"/>
<dbReference type="GO" id="GO:0022625">
    <property type="term" value="C:cytosolic large ribosomal subunit"/>
    <property type="evidence" value="ECO:0007669"/>
    <property type="project" value="TreeGrafter"/>
</dbReference>
<dbReference type="GO" id="GO:0019843">
    <property type="term" value="F:rRNA binding"/>
    <property type="evidence" value="ECO:0007669"/>
    <property type="project" value="UniProtKB-KW"/>
</dbReference>
<dbReference type="GO" id="GO:0003735">
    <property type="term" value="F:structural constituent of ribosome"/>
    <property type="evidence" value="ECO:0007669"/>
    <property type="project" value="InterPro"/>
</dbReference>
<dbReference type="GO" id="GO:0006412">
    <property type="term" value="P:translation"/>
    <property type="evidence" value="ECO:0007669"/>
    <property type="project" value="InterPro"/>
</dbReference>
<dbReference type="CDD" id="cd00336">
    <property type="entry name" value="Ribosomal_L22"/>
    <property type="match status" value="1"/>
</dbReference>
<dbReference type="Gene3D" id="3.90.470.10">
    <property type="entry name" value="Ribosomal protein L22/L17"/>
    <property type="match status" value="1"/>
</dbReference>
<dbReference type="InterPro" id="IPR001063">
    <property type="entry name" value="Ribosomal_uL22"/>
</dbReference>
<dbReference type="InterPro" id="IPR005727">
    <property type="entry name" value="Ribosomal_uL22_bac/chlpt-type"/>
</dbReference>
<dbReference type="InterPro" id="IPR047867">
    <property type="entry name" value="Ribosomal_uL22_bac/org-type"/>
</dbReference>
<dbReference type="InterPro" id="IPR036394">
    <property type="entry name" value="Ribosomal_uL22_sf"/>
</dbReference>
<dbReference type="NCBIfam" id="TIGR01044">
    <property type="entry name" value="rplV_bact"/>
    <property type="match status" value="1"/>
</dbReference>
<dbReference type="PANTHER" id="PTHR13501">
    <property type="entry name" value="CHLOROPLAST 50S RIBOSOMAL PROTEIN L22-RELATED"/>
    <property type="match status" value="1"/>
</dbReference>
<dbReference type="PANTHER" id="PTHR13501:SF8">
    <property type="entry name" value="LARGE RIBOSOMAL SUBUNIT PROTEIN UL22M"/>
    <property type="match status" value="1"/>
</dbReference>
<dbReference type="Pfam" id="PF00237">
    <property type="entry name" value="Ribosomal_L22"/>
    <property type="match status" value="1"/>
</dbReference>
<dbReference type="SUPFAM" id="SSF54843">
    <property type="entry name" value="Ribosomal protein L22"/>
    <property type="match status" value="1"/>
</dbReference>
<reference key="1">
    <citation type="journal article" date="1994" name="J. Bacteriol.">
        <title>Phylogeny of mycoplasmalike organisms (phytoplasmas): a basis for their classification.</title>
        <authorList>
            <person name="Gundersen D.E."/>
            <person name="Lee I.M."/>
            <person name="Rehner S.A."/>
            <person name="Davis R.E."/>
            <person name="Kingsbury D.T."/>
        </authorList>
    </citation>
    <scope>NUCLEOTIDE SEQUENCE [GENOMIC DNA]</scope>
</reference>
<name>RL22_LOWBP</name>
<feature type="chain" id="PRO_0000125173" description="Large ribosomal subunit protein uL22">
    <location>
        <begin position="1"/>
        <end position="91" status="greater than"/>
    </location>
</feature>
<feature type="non-terminal residue">
    <location>
        <position position="91"/>
    </location>
</feature>
<comment type="function">
    <text evidence="1">This protein binds specifically to 23S rRNA; its binding is stimulated by other ribosomal proteins, e.g. L4, L17, and L20. It is important during the early stages of 50S assembly. It makes multiple contacts with different domains of the 23S rRNA in the assembled 50S subunit and ribosome (By similarity).</text>
</comment>
<comment type="function">
    <text evidence="1">The globular domain of the protein is located near the polypeptide exit tunnel on the outside of the subunit, while an extended beta-hairpin is found that lines the wall of the exit tunnel in the center of the 70S ribosome.</text>
</comment>
<comment type="subunit">
    <text evidence="1">Part of the 50S ribosomal subunit.</text>
</comment>
<comment type="similarity">
    <text evidence="2">Belongs to the universal ribosomal protein uL22 family.</text>
</comment>
<gene>
    <name type="primary">rplV</name>
    <name type="synonym">rpl22</name>
</gene>
<protein>
    <recommendedName>
        <fullName evidence="2">Large ribosomal subunit protein uL22</fullName>
    </recommendedName>
    <alternativeName>
        <fullName>50S ribosomal protein L22</fullName>
    </alternativeName>
</protein>
<accession>Q48879</accession>
<keyword id="KW-0687">Ribonucleoprotein</keyword>
<keyword id="KW-0689">Ribosomal protein</keyword>
<keyword id="KW-0694">RNA-binding</keyword>
<keyword id="KW-0699">rRNA-binding</keyword>
<evidence type="ECO:0000250" key="1"/>
<evidence type="ECO:0000305" key="2"/>
<sequence length="91" mass="10259">MKVKAFANQVHIAPRKARLVVDLIRGKQIKEAEAILMFTSKSASPIISKLLKSAVSNAVHNFKLDENNLYVEEIFVNESLRLPRLFPRAKG</sequence>
<proteinExistence type="inferred from homology"/>